<name>FYV4_YARLI</name>
<comment type="function">
    <text evidence="1">Involved in telomere length regulation.</text>
</comment>
<comment type="subcellular location">
    <subcellularLocation>
        <location>Mitochondrion</location>
    </subcellularLocation>
</comment>
<comment type="similarity">
    <text evidence="3">Belongs to the mitochondrion-specific ribosomal protein mS41 family.</text>
</comment>
<gene>
    <name type="primary">FYV4</name>
    <name type="ordered locus">YALI0E32747g</name>
</gene>
<keyword id="KW-0496">Mitochondrion</keyword>
<keyword id="KW-1185">Reference proteome</keyword>
<keyword id="KW-0687">Ribonucleoprotein</keyword>
<keyword id="KW-0689">Ribosomal protein</keyword>
<keyword id="KW-0809">Transit peptide</keyword>
<reference key="1">
    <citation type="journal article" date="2004" name="Nature">
        <title>Genome evolution in yeasts.</title>
        <authorList>
            <person name="Dujon B."/>
            <person name="Sherman D."/>
            <person name="Fischer G."/>
            <person name="Durrens P."/>
            <person name="Casaregola S."/>
            <person name="Lafontaine I."/>
            <person name="de Montigny J."/>
            <person name="Marck C."/>
            <person name="Neuveglise C."/>
            <person name="Talla E."/>
            <person name="Goffard N."/>
            <person name="Frangeul L."/>
            <person name="Aigle M."/>
            <person name="Anthouard V."/>
            <person name="Babour A."/>
            <person name="Barbe V."/>
            <person name="Barnay S."/>
            <person name="Blanchin S."/>
            <person name="Beckerich J.-M."/>
            <person name="Beyne E."/>
            <person name="Bleykasten C."/>
            <person name="Boisrame A."/>
            <person name="Boyer J."/>
            <person name="Cattolico L."/>
            <person name="Confanioleri F."/>
            <person name="de Daruvar A."/>
            <person name="Despons L."/>
            <person name="Fabre E."/>
            <person name="Fairhead C."/>
            <person name="Ferry-Dumazet H."/>
            <person name="Groppi A."/>
            <person name="Hantraye F."/>
            <person name="Hennequin C."/>
            <person name="Jauniaux N."/>
            <person name="Joyet P."/>
            <person name="Kachouri R."/>
            <person name="Kerrest A."/>
            <person name="Koszul R."/>
            <person name="Lemaire M."/>
            <person name="Lesur I."/>
            <person name="Ma L."/>
            <person name="Muller H."/>
            <person name="Nicaud J.-M."/>
            <person name="Nikolski M."/>
            <person name="Oztas S."/>
            <person name="Ozier-Kalogeropoulos O."/>
            <person name="Pellenz S."/>
            <person name="Potier S."/>
            <person name="Richard G.-F."/>
            <person name="Straub M.-L."/>
            <person name="Suleau A."/>
            <person name="Swennen D."/>
            <person name="Tekaia F."/>
            <person name="Wesolowski-Louvel M."/>
            <person name="Westhof E."/>
            <person name="Wirth B."/>
            <person name="Zeniou-Meyer M."/>
            <person name="Zivanovic Y."/>
            <person name="Bolotin-Fukuhara M."/>
            <person name="Thierry A."/>
            <person name="Bouchier C."/>
            <person name="Caudron B."/>
            <person name="Scarpelli C."/>
            <person name="Gaillardin C."/>
            <person name="Weissenbach J."/>
            <person name="Wincker P."/>
            <person name="Souciet J.-L."/>
        </authorList>
    </citation>
    <scope>NUCLEOTIDE SEQUENCE [LARGE SCALE GENOMIC DNA]</scope>
    <source>
        <strain>CLIB 122 / E 150</strain>
    </source>
</reference>
<feature type="transit peptide" description="Mitochondrion" evidence="2">
    <location>
        <begin position="1"/>
        <end position="24"/>
    </location>
</feature>
<feature type="chain" id="PRO_0000292475" description="Small ribosomal subunit protein mS41">
    <location>
        <begin position="25"/>
        <end position="118"/>
    </location>
</feature>
<proteinExistence type="inferred from homology"/>
<organism>
    <name type="scientific">Yarrowia lipolytica (strain CLIB 122 / E 150)</name>
    <name type="common">Yeast</name>
    <name type="synonym">Candida lipolytica</name>
    <dbReference type="NCBI Taxonomy" id="284591"/>
    <lineage>
        <taxon>Eukaryota</taxon>
        <taxon>Fungi</taxon>
        <taxon>Dikarya</taxon>
        <taxon>Ascomycota</taxon>
        <taxon>Saccharomycotina</taxon>
        <taxon>Dipodascomycetes</taxon>
        <taxon>Dipodascales</taxon>
        <taxon>Dipodascales incertae sedis</taxon>
        <taxon>Yarrowia</taxon>
    </lineage>
</organism>
<sequence>MLRVVAKAQYPAAVRCFSTSHAAFAKVSFESSEDFLKKIGRDTVKLAEKFETWDELKNSTSSDLKEKGIEARDRRYIMTQLYRYKNGEKIREIPRGKKTWGGERKRNLVQALFKAGQN</sequence>
<accession>Q6C3R3</accession>
<protein>
    <recommendedName>
        <fullName evidence="3">Small ribosomal subunit protein mS41</fullName>
    </recommendedName>
    <alternativeName>
        <fullName>Protein FYV4, mitochondrial</fullName>
    </alternativeName>
</protein>
<evidence type="ECO:0000250" key="1"/>
<evidence type="ECO:0000255" key="2"/>
<evidence type="ECO:0000305" key="3"/>
<dbReference type="EMBL" id="CR382131">
    <property type="protein sequence ID" value="CAG80303.2"/>
    <property type="molecule type" value="Genomic_DNA"/>
</dbReference>
<dbReference type="RefSeq" id="XP_504699.2">
    <property type="nucleotide sequence ID" value="XM_504699.2"/>
</dbReference>
<dbReference type="SMR" id="Q6C3R3"/>
<dbReference type="FunCoup" id="Q6C3R3">
    <property type="interactions" value="141"/>
</dbReference>
<dbReference type="STRING" id="284591.Q6C3R3"/>
<dbReference type="EnsemblFungi" id="CAG80303">
    <property type="protein sequence ID" value="CAG80303"/>
    <property type="gene ID" value="YALI0_E32747g"/>
</dbReference>
<dbReference type="KEGG" id="yli:2911904"/>
<dbReference type="VEuPathDB" id="FungiDB:YALI0_E32747g"/>
<dbReference type="HOGENOM" id="CLU_2074984_0_0_1"/>
<dbReference type="InParanoid" id="Q6C3R3"/>
<dbReference type="OMA" id="KIREIPR"/>
<dbReference type="OrthoDB" id="124832at4891"/>
<dbReference type="Proteomes" id="UP000001300">
    <property type="component" value="Chromosome E"/>
</dbReference>
<dbReference type="GO" id="GO:0005739">
    <property type="term" value="C:mitochondrion"/>
    <property type="evidence" value="ECO:0000318"/>
    <property type="project" value="GO_Central"/>
</dbReference>
<dbReference type="GO" id="GO:1990904">
    <property type="term" value="C:ribonucleoprotein complex"/>
    <property type="evidence" value="ECO:0007669"/>
    <property type="project" value="UniProtKB-KW"/>
</dbReference>
<dbReference type="GO" id="GO:0005840">
    <property type="term" value="C:ribosome"/>
    <property type="evidence" value="ECO:0007669"/>
    <property type="project" value="UniProtKB-KW"/>
</dbReference>
<dbReference type="InterPro" id="IPR039603">
    <property type="entry name" value="Ribosomal_mS41"/>
</dbReference>
<dbReference type="InterPro" id="IPR019083">
    <property type="entry name" value="SAM_Ribosomal_mS41"/>
</dbReference>
<dbReference type="PANTHER" id="PTHR28235">
    <property type="entry name" value="PROTEIN FYV4, MITOCHONDRIAL"/>
    <property type="match status" value="1"/>
</dbReference>
<dbReference type="PANTHER" id="PTHR28235:SF1">
    <property type="entry name" value="SMALL RIBOSOMAL SUBUNIT PROTEIN MS41"/>
    <property type="match status" value="1"/>
</dbReference>
<dbReference type="Pfam" id="PF09597">
    <property type="entry name" value="SAM_Ribosomal_mS41"/>
    <property type="match status" value="1"/>
</dbReference>
<dbReference type="SMART" id="SM01238">
    <property type="entry name" value="IGR"/>
    <property type="match status" value="1"/>
</dbReference>